<sequence length="41" mass="4779">MIKNFIFDNLIILAVPFMIKTSLKTNLIFFFLCVFVPHMAS</sequence>
<dbReference type="EMBL" id="U00096">
    <property type="protein sequence ID" value="ABV59575.1"/>
    <property type="molecule type" value="Genomic_DNA"/>
</dbReference>
<dbReference type="EMBL" id="AP009048">
    <property type="status" value="NOT_ANNOTATED_CDS"/>
    <property type="molecule type" value="Genomic_DNA"/>
</dbReference>
<dbReference type="RefSeq" id="WP_000594405.1">
    <property type="nucleotide sequence ID" value="NZ_SSUV01000014.1"/>
</dbReference>
<dbReference type="RefSeq" id="YP_001491548.1">
    <property type="nucleotide sequence ID" value="NC_000913.3"/>
</dbReference>
<dbReference type="FunCoup" id="A8DYQ1">
    <property type="interactions" value="2"/>
</dbReference>
<dbReference type="STRING" id="511145.b4655"/>
<dbReference type="PaxDb" id="511145-b4655"/>
<dbReference type="EnsemblBacteria" id="ABV59575">
    <property type="protein sequence ID" value="ABV59575"/>
    <property type="gene ID" value="b4655"/>
</dbReference>
<dbReference type="GeneID" id="5625581"/>
<dbReference type="KEGG" id="eco:b4655"/>
<dbReference type="PATRIC" id="fig|83333.113.peg.4407"/>
<dbReference type="InParanoid" id="A8DYQ1"/>
<dbReference type="BioCyc" id="EcoCyc:MONOMER0-2840"/>
<dbReference type="PRO" id="PR:A8DYQ1"/>
<dbReference type="Proteomes" id="UP000000625">
    <property type="component" value="Chromosome"/>
</dbReference>
<dbReference type="GO" id="GO:0005886">
    <property type="term" value="C:plasma membrane"/>
    <property type="evidence" value="ECO:0007669"/>
    <property type="project" value="UniProtKB-SubCell"/>
</dbReference>
<reference key="1">
    <citation type="journal article" date="1997" name="Science">
        <title>The complete genome sequence of Escherichia coli K-12.</title>
        <authorList>
            <person name="Blattner F.R."/>
            <person name="Plunkett G. III"/>
            <person name="Bloch C.A."/>
            <person name="Perna N.T."/>
            <person name="Burland V."/>
            <person name="Riley M."/>
            <person name="Collado-Vides J."/>
            <person name="Glasner J.D."/>
            <person name="Rode C.K."/>
            <person name="Mayhew G.F."/>
            <person name="Gregor J."/>
            <person name="Davis N.W."/>
            <person name="Kirkpatrick H.A."/>
            <person name="Goeden M.A."/>
            <person name="Rose D.J."/>
            <person name="Mau B."/>
            <person name="Shao Y."/>
        </authorList>
    </citation>
    <scope>NUCLEOTIDE SEQUENCE [LARGE SCALE GENOMIC DNA]</scope>
    <source>
        <strain>K12 / MG1655 / ATCC 47076</strain>
    </source>
</reference>
<reference key="2">
    <citation type="journal article" date="2006" name="Mol. Syst. Biol.">
        <title>Highly accurate genome sequences of Escherichia coli K-12 strains MG1655 and W3110.</title>
        <authorList>
            <person name="Hayashi K."/>
            <person name="Morooka N."/>
            <person name="Yamamoto Y."/>
            <person name="Fujita K."/>
            <person name="Isono K."/>
            <person name="Choi S."/>
            <person name="Ohtsubo E."/>
            <person name="Baba T."/>
            <person name="Wanner B.L."/>
            <person name="Mori H."/>
            <person name="Horiuchi T."/>
        </authorList>
    </citation>
    <scope>NUCLEOTIDE SEQUENCE [LARGE SCALE GENOMIC DNA]</scope>
    <source>
        <strain>K12 / W3110 / ATCC 27325 / DSM 5911</strain>
    </source>
</reference>
<reference key="3">
    <citation type="journal article" date="2008" name="Mol. Microbiol.">
        <title>Small membrane proteins found by comparative genomics and ribosome binding site models.</title>
        <authorList>
            <person name="Hemm M.R."/>
            <person name="Paul B.J."/>
            <person name="Schneider T.D."/>
            <person name="Storz G."/>
            <person name="Rudd K.E."/>
        </authorList>
    </citation>
    <scope>INDUCTION</scope>
    <source>
        <strain>K12 / MG1655 / ATCC 47076</strain>
    </source>
</reference>
<reference key="4">
    <citation type="journal article" date="2010" name="J. Bacteriol.">
        <title>Small stress response proteins in Escherichia coli: proteins missed by classical proteomic studies.</title>
        <authorList>
            <person name="Hemm M.R."/>
            <person name="Paul B.J."/>
            <person name="Miranda-Rios J."/>
            <person name="Zhang A."/>
            <person name="Soltanzad N."/>
            <person name="Storz G."/>
        </authorList>
    </citation>
    <scope>INDUCTION</scope>
    <source>
        <strain>K12 / MG1655 / ATCC 47076</strain>
    </source>
</reference>
<feature type="chain" id="PRO_0000315218" description="Uncharacterized protein YthA">
    <location>
        <begin position="1"/>
        <end position="41"/>
    </location>
</feature>
<feature type="transmembrane region" description="Helical" evidence="1">
    <location>
        <begin position="10"/>
        <end position="32"/>
    </location>
</feature>
<keyword id="KW-0997">Cell inner membrane</keyword>
<keyword id="KW-1003">Cell membrane</keyword>
<keyword id="KW-0472">Membrane</keyword>
<keyword id="KW-1185">Reference proteome</keyword>
<keyword id="KW-0346">Stress response</keyword>
<keyword id="KW-0812">Transmembrane</keyword>
<keyword id="KW-1133">Transmembrane helix</keyword>
<protein>
    <recommendedName>
        <fullName>Uncharacterized protein YthA</fullName>
    </recommendedName>
</protein>
<proteinExistence type="evidence at protein level"/>
<comment type="subcellular location">
    <subcellularLocation>
        <location evidence="4">Cell inner membrane</location>
        <topology evidence="4">Single-pass membrane protein</topology>
    </subcellularLocation>
</comment>
<comment type="induction">
    <text evidence="2 3">Constitutively expressed, induced at 45 degrees Celsius (at protein level).</text>
</comment>
<evidence type="ECO:0000255" key="1"/>
<evidence type="ECO:0000269" key="2">
    <source>
    </source>
</evidence>
<evidence type="ECO:0000269" key="3">
    <source>
    </source>
</evidence>
<evidence type="ECO:0000305" key="4"/>
<accession>A8DYQ1</accession>
<name>YTHA_ECOLI</name>
<gene>
    <name type="primary">ythA</name>
    <name type="ordered locus">b4655</name>
    <name type="ordered locus">JW5769.1</name>
</gene>
<organism>
    <name type="scientific">Escherichia coli (strain K12)</name>
    <dbReference type="NCBI Taxonomy" id="83333"/>
    <lineage>
        <taxon>Bacteria</taxon>
        <taxon>Pseudomonadati</taxon>
        <taxon>Pseudomonadota</taxon>
        <taxon>Gammaproteobacteria</taxon>
        <taxon>Enterobacterales</taxon>
        <taxon>Enterobacteriaceae</taxon>
        <taxon>Escherichia</taxon>
    </lineage>
</organism>